<accession>A2QCV8</accession>
<gene>
    <name type="primary">pgaB</name>
    <name type="synonym">pecB</name>
    <name type="ORF">An02g04900</name>
</gene>
<dbReference type="EC" id="3.2.1.15"/>
<dbReference type="EMBL" id="AM270009">
    <property type="protein sequence ID" value="CAK47667.1"/>
    <property type="molecule type" value="Genomic_DNA"/>
</dbReference>
<dbReference type="RefSeq" id="XP_001399628.1">
    <property type="nucleotide sequence ID" value="XM_001399591.2"/>
</dbReference>
<dbReference type="SMR" id="A2QCV8"/>
<dbReference type="CAZy" id="GH28">
    <property type="family name" value="Glycoside Hydrolase Family 28"/>
</dbReference>
<dbReference type="GlyCosmos" id="A2QCV8">
    <property type="glycosylation" value="1 site, No reported glycans"/>
</dbReference>
<dbReference type="EnsemblFungi" id="CAK47667">
    <property type="protein sequence ID" value="CAK47667"/>
    <property type="gene ID" value="An02g04900"/>
</dbReference>
<dbReference type="GeneID" id="4978979"/>
<dbReference type="KEGG" id="ang:An02g04900"/>
<dbReference type="VEuPathDB" id="FungiDB:An02g04900"/>
<dbReference type="HOGENOM" id="CLU_040116_0_0_1"/>
<dbReference type="Proteomes" id="UP000006706">
    <property type="component" value="Chromosome 4R"/>
</dbReference>
<dbReference type="GO" id="GO:0005576">
    <property type="term" value="C:extracellular region"/>
    <property type="evidence" value="ECO:0000250"/>
    <property type="project" value="UniProtKB"/>
</dbReference>
<dbReference type="GO" id="GO:0004650">
    <property type="term" value="F:polygalacturonase activity"/>
    <property type="evidence" value="ECO:0000250"/>
    <property type="project" value="UniProtKB"/>
</dbReference>
<dbReference type="GO" id="GO:0071555">
    <property type="term" value="P:cell wall organization"/>
    <property type="evidence" value="ECO:0007669"/>
    <property type="project" value="UniProtKB-KW"/>
</dbReference>
<dbReference type="GO" id="GO:0045490">
    <property type="term" value="P:pectin catabolic process"/>
    <property type="evidence" value="ECO:0000250"/>
    <property type="project" value="UniProtKB"/>
</dbReference>
<dbReference type="FunFam" id="2.160.20.10:FF:000002">
    <property type="entry name" value="Endopolygalacturonase D"/>
    <property type="match status" value="1"/>
</dbReference>
<dbReference type="Gene3D" id="2.160.20.10">
    <property type="entry name" value="Single-stranded right-handed beta-helix, Pectin lyase-like"/>
    <property type="match status" value="1"/>
</dbReference>
<dbReference type="InterPro" id="IPR000743">
    <property type="entry name" value="Glyco_hydro_28"/>
</dbReference>
<dbReference type="InterPro" id="IPR050434">
    <property type="entry name" value="Glycosyl_hydrlase_28"/>
</dbReference>
<dbReference type="InterPro" id="IPR006626">
    <property type="entry name" value="PbH1"/>
</dbReference>
<dbReference type="InterPro" id="IPR012334">
    <property type="entry name" value="Pectin_lyas_fold"/>
</dbReference>
<dbReference type="InterPro" id="IPR011050">
    <property type="entry name" value="Pectin_lyase_fold/virulence"/>
</dbReference>
<dbReference type="PANTHER" id="PTHR31884:SF13">
    <property type="entry name" value="ENDOPOLYGALACTURONASE B"/>
    <property type="match status" value="1"/>
</dbReference>
<dbReference type="PANTHER" id="PTHR31884">
    <property type="entry name" value="POLYGALACTURONASE"/>
    <property type="match status" value="1"/>
</dbReference>
<dbReference type="Pfam" id="PF00295">
    <property type="entry name" value="Glyco_hydro_28"/>
    <property type="match status" value="1"/>
</dbReference>
<dbReference type="SMART" id="SM00710">
    <property type="entry name" value="PbH1"/>
    <property type="match status" value="6"/>
</dbReference>
<dbReference type="SUPFAM" id="SSF51126">
    <property type="entry name" value="Pectin lyase-like"/>
    <property type="match status" value="1"/>
</dbReference>
<dbReference type="PROSITE" id="PS00502">
    <property type="entry name" value="POLYGALACTURONASE"/>
    <property type="match status" value="1"/>
</dbReference>
<evidence type="ECO:0000250" key="1"/>
<evidence type="ECO:0000255" key="2"/>
<evidence type="ECO:0000255" key="3">
    <source>
        <dbReference type="PROSITE-ProRule" id="PRU10052"/>
    </source>
</evidence>
<evidence type="ECO:0000305" key="4"/>
<protein>
    <recommendedName>
        <fullName>Probable endopolygalacturonase B</fullName>
        <ecNumber>3.2.1.15</ecNumber>
    </recommendedName>
    <alternativeName>
        <fullName>Pectinase B</fullName>
    </alternativeName>
    <alternativeName>
        <fullName>Polygalacturonase B</fullName>
    </alternativeName>
</protein>
<organism>
    <name type="scientific">Aspergillus niger (strain ATCC MYA-4892 / CBS 513.88 / FGSC A1513)</name>
    <dbReference type="NCBI Taxonomy" id="425011"/>
    <lineage>
        <taxon>Eukaryota</taxon>
        <taxon>Fungi</taxon>
        <taxon>Dikarya</taxon>
        <taxon>Ascomycota</taxon>
        <taxon>Pezizomycotina</taxon>
        <taxon>Eurotiomycetes</taxon>
        <taxon>Eurotiomycetidae</taxon>
        <taxon>Eurotiales</taxon>
        <taxon>Aspergillaceae</taxon>
        <taxon>Aspergillus</taxon>
        <taxon>Aspergillus subgen. Circumdati</taxon>
    </lineage>
</organism>
<sequence length="362" mass="37819">MHFLQNAVVAATMGAALAAAAPLEKRSCTFTSASAAKSGKSSCSTITLDNIAVPAGETLDLTGLKKGTTVIFEGETTFGYKEWKGPLISMSGTDITVKQASGAKINCDGARWWDGKGSNGGKTKPKFFQAHKLDQSSITGLKVYNTPVQGFSILADHLTITDVTIDNSAGTSKGHNTDAFDIGQSTYITIDGATVYNQDDCLAINSGEHITFTNGYCDGGHGLSIGSIGGRSDNTVNDVTISNSKVLNSQNGVRIKTIYGKTGTVENVKFEDITLSDISKYGIVVEQDYENGSPTGTPTNGVKVEDITFKKVTGSVKSSGTDIYILCGSGSCSNWTWSGVDVTGGKKSSKCKNVPSGASCSD</sequence>
<reference key="1">
    <citation type="journal article" date="2007" name="Nat. Biotechnol.">
        <title>Genome sequencing and analysis of the versatile cell factory Aspergillus niger CBS 513.88.</title>
        <authorList>
            <person name="Pel H.J."/>
            <person name="de Winde J.H."/>
            <person name="Archer D.B."/>
            <person name="Dyer P.S."/>
            <person name="Hofmann G."/>
            <person name="Schaap P.J."/>
            <person name="Turner G."/>
            <person name="de Vries R.P."/>
            <person name="Albang R."/>
            <person name="Albermann K."/>
            <person name="Andersen M.R."/>
            <person name="Bendtsen J.D."/>
            <person name="Benen J.A.E."/>
            <person name="van den Berg M."/>
            <person name="Breestraat S."/>
            <person name="Caddick M.X."/>
            <person name="Contreras R."/>
            <person name="Cornell M."/>
            <person name="Coutinho P.M."/>
            <person name="Danchin E.G.J."/>
            <person name="Debets A.J.M."/>
            <person name="Dekker P."/>
            <person name="van Dijck P.W.M."/>
            <person name="van Dijk A."/>
            <person name="Dijkhuizen L."/>
            <person name="Driessen A.J.M."/>
            <person name="d'Enfert C."/>
            <person name="Geysens S."/>
            <person name="Goosen C."/>
            <person name="Groot G.S.P."/>
            <person name="de Groot P.W.J."/>
            <person name="Guillemette T."/>
            <person name="Henrissat B."/>
            <person name="Herweijer M."/>
            <person name="van den Hombergh J.P.T.W."/>
            <person name="van den Hondel C.A.M.J.J."/>
            <person name="van der Heijden R.T.J.M."/>
            <person name="van der Kaaij R.M."/>
            <person name="Klis F.M."/>
            <person name="Kools H.J."/>
            <person name="Kubicek C.P."/>
            <person name="van Kuyk P.A."/>
            <person name="Lauber J."/>
            <person name="Lu X."/>
            <person name="van der Maarel M.J.E.C."/>
            <person name="Meulenberg R."/>
            <person name="Menke H."/>
            <person name="Mortimer M.A."/>
            <person name="Nielsen J."/>
            <person name="Oliver S.G."/>
            <person name="Olsthoorn M."/>
            <person name="Pal K."/>
            <person name="van Peij N.N.M.E."/>
            <person name="Ram A.F.J."/>
            <person name="Rinas U."/>
            <person name="Roubos J.A."/>
            <person name="Sagt C.M.J."/>
            <person name="Schmoll M."/>
            <person name="Sun J."/>
            <person name="Ussery D."/>
            <person name="Varga J."/>
            <person name="Vervecken W."/>
            <person name="van de Vondervoort P.J.J."/>
            <person name="Wedler H."/>
            <person name="Woesten H.A.B."/>
            <person name="Zeng A.-P."/>
            <person name="van Ooyen A.J.J."/>
            <person name="Visser J."/>
            <person name="Stam H."/>
        </authorList>
    </citation>
    <scope>NUCLEOTIDE SEQUENCE [LARGE SCALE GENOMIC DNA]</scope>
    <source>
        <strain>ATCC MYA-4892 / CBS 513.88 / FGSC A1513</strain>
    </source>
</reference>
<name>PGLRB_ASPNC</name>
<keyword id="KW-0961">Cell wall biogenesis/degradation</keyword>
<keyword id="KW-1015">Disulfide bond</keyword>
<keyword id="KW-0325">Glycoprotein</keyword>
<keyword id="KW-0326">Glycosidase</keyword>
<keyword id="KW-0378">Hydrolase</keyword>
<keyword id="KW-1185">Reference proteome</keyword>
<keyword id="KW-0677">Repeat</keyword>
<keyword id="KW-0964">Secreted</keyword>
<keyword id="KW-0732">Signal</keyword>
<keyword id="KW-0865">Zymogen</keyword>
<proteinExistence type="inferred from homology"/>
<feature type="signal peptide" evidence="2">
    <location>
        <begin position="1"/>
        <end position="20"/>
    </location>
</feature>
<feature type="propeptide" id="PRO_0000393652" evidence="2">
    <location>
        <begin position="21"/>
        <end position="25"/>
    </location>
</feature>
<feature type="chain" id="PRO_5000219579" description="Probable endopolygalacturonase B">
    <location>
        <begin position="26"/>
        <end position="362"/>
    </location>
</feature>
<feature type="repeat" description="PbH1 1">
    <location>
        <begin position="155"/>
        <end position="184"/>
    </location>
</feature>
<feature type="repeat" description="PbH1 2">
    <location>
        <begin position="185"/>
        <end position="206"/>
    </location>
</feature>
<feature type="repeat" description="PbH1 3">
    <location>
        <begin position="207"/>
        <end position="227"/>
    </location>
</feature>
<feature type="repeat" description="PbH1 4">
    <location>
        <begin position="236"/>
        <end position="257"/>
    </location>
</feature>
<feature type="repeat" description="PbH1 5">
    <location>
        <begin position="265"/>
        <end position="287"/>
    </location>
</feature>
<feature type="repeat" description="PbH1 6">
    <location>
        <begin position="299"/>
        <end position="344"/>
    </location>
</feature>
<feature type="active site" description="Proton donor" evidence="3">
    <location>
        <position position="199"/>
    </location>
</feature>
<feature type="active site" evidence="3">
    <location>
        <position position="221"/>
    </location>
</feature>
<feature type="glycosylation site" description="N-linked (GlcNAc...) asparagine" evidence="2">
    <location>
        <position position="334"/>
    </location>
</feature>
<feature type="disulfide bond" evidence="1">
    <location>
        <begin position="28"/>
        <end position="43"/>
    </location>
</feature>
<feature type="disulfide bond" evidence="1">
    <location>
        <begin position="201"/>
        <end position="217"/>
    </location>
</feature>
<feature type="disulfide bond" evidence="1">
    <location>
        <begin position="327"/>
        <end position="332"/>
    </location>
</feature>
<feature type="disulfide bond" evidence="1">
    <location>
        <begin position="351"/>
        <end position="360"/>
    </location>
</feature>
<comment type="function">
    <text evidence="1">Involved in maceration and soft-rotting of plant tissue. Hydrolyzes the 1,4-alpha glycosidic bonds of de-esterified pectate in the smooth region of the plant cell wall (By similarity).</text>
</comment>
<comment type="catalytic activity">
    <reaction>
        <text>(1,4-alpha-D-galacturonosyl)n+m + H2O = (1,4-alpha-D-galacturonosyl)n + (1,4-alpha-D-galacturonosyl)m.</text>
        <dbReference type="EC" id="3.2.1.15"/>
    </reaction>
</comment>
<comment type="subcellular location">
    <subcellularLocation>
        <location evidence="1">Secreted</location>
    </subcellularLocation>
</comment>
<comment type="similarity">
    <text evidence="4">Belongs to the glycosyl hydrolase 28 family.</text>
</comment>